<name>CAPAM_MOUSE</name>
<evidence type="ECO:0000250" key="1">
    <source>
        <dbReference type="UniProtKB" id="A0A0R4IKJ1"/>
    </source>
</evidence>
<evidence type="ECO:0000250" key="2">
    <source>
        <dbReference type="UniProtKB" id="Q9H4Z3"/>
    </source>
</evidence>
<evidence type="ECO:0000255" key="3"/>
<evidence type="ECO:0000255" key="4">
    <source>
        <dbReference type="PROSITE-ProRule" id="PRU00224"/>
    </source>
</evidence>
<evidence type="ECO:0000256" key="5">
    <source>
        <dbReference type="SAM" id="MobiDB-lite"/>
    </source>
</evidence>
<evidence type="ECO:0000269" key="6">
    <source>
    </source>
</evidence>
<evidence type="ECO:0000303" key="7">
    <source>
    </source>
</evidence>
<evidence type="ECO:0000305" key="8"/>
<evidence type="ECO:0000312" key="9">
    <source>
        <dbReference type="MGI" id="MGI:2443858"/>
    </source>
</evidence>
<evidence type="ECO:0007744" key="10">
    <source>
    </source>
</evidence>
<evidence type="ECO:0007744" key="11">
    <source>
    </source>
</evidence>
<organism>
    <name type="scientific">Mus musculus</name>
    <name type="common">Mouse</name>
    <dbReference type="NCBI Taxonomy" id="10090"/>
    <lineage>
        <taxon>Eukaryota</taxon>
        <taxon>Metazoa</taxon>
        <taxon>Chordata</taxon>
        <taxon>Craniata</taxon>
        <taxon>Vertebrata</taxon>
        <taxon>Euteleostomi</taxon>
        <taxon>Mammalia</taxon>
        <taxon>Eutheria</taxon>
        <taxon>Euarchontoglires</taxon>
        <taxon>Glires</taxon>
        <taxon>Rodentia</taxon>
        <taxon>Myomorpha</taxon>
        <taxon>Muroidea</taxon>
        <taxon>Muridae</taxon>
        <taxon>Murinae</taxon>
        <taxon>Mus</taxon>
        <taxon>Mus</taxon>
    </lineage>
</organism>
<accession>P59114</accession>
<sequence length="706" mass="80504">MANENHGSPREGASLLSHSPGTSSQSQPCSPKPVRLVQDLPEELVHAGWEKCWSRRESRPYYFNRFTNQSLWEMPVLGQHDVLSDPLGLNATPLPQDSSLVETPPVENKSRKRQLSEEQPSGNGVKKPKIEIPVTPTSQSVPSSPSIPGTPTLKIWGSSTEDKQAALLRPTEVYWDLDIQTNAVIKHRGPSEVLPPHPDVELLRSQLILKLRQHYRELCQQREGIEPPRESFNRWMLERKVVDKGCDPLLPSNCEPVVSPSMFREIMNDIPIRLSRIKFREEAKRLLFKYAEAARRLIESRSASPDSRKVVKWNVEDTFSWLRKEHSASKEDYMDRLEHLRRQCGPHVSAAAKDSVEGICSKIYHISLEYVKRIREKHLAVLKENNIPEEVEASELEPRLVYCYPVRLAVSAPPMPSVEMHVENSVVCIRYKGEMVKVSRSYFSKLWLLYRYSCVDDSAFERFLPRVWCLLRRYQMMFGVGLYEGTGLQGSLPVHVFETLHRLFGVSFECFASPLNCYFRQYCSAFPDTDGYFGSRGPCLDFTPLSGSFEANPPFCEELMDAMVSHFEKLLESSAEPLSFIVFIPEWREPPTPALTRMEQSRFKRHQLVLPAFEHEYRSGSQHICKKEEMHYKAVHNTAVLFLQNGPGFAKWGPTPERLQELTAAYKQSGRSHGSSSSSSSSSSSSEAKDRDSGREQGPSREPHPT</sequence>
<keyword id="KW-0489">Methyltransferase</keyword>
<keyword id="KW-0539">Nucleus</keyword>
<keyword id="KW-0597">Phosphoprotein</keyword>
<keyword id="KW-1185">Reference proteome</keyword>
<keyword id="KW-0808">Transferase</keyword>
<protein>
    <recommendedName>
        <fullName evidence="2">mRNA (2'-O-methyladenosine-N(6)-)-methyltransferase</fullName>
        <ecNumber evidence="2">2.1.1.62</ecNumber>
    </recommendedName>
    <alternativeName>
        <fullName evidence="2">Cap-specific adenosine methyltransferase</fullName>
        <shortName evidence="2">CAPAM</shortName>
    </alternativeName>
    <alternativeName>
        <fullName evidence="7">Phosphorylated CTD-interacting factor 1</fullName>
    </alternativeName>
</protein>
<comment type="function">
    <text evidence="2 6">Cap-specific adenosine methyltransferase that catalyzes formation of N(6),2'-O-dimethyladenosine cap (m6A(m)) by methylating the adenosine at the second transcribed position of capped mRNAs (PubMed:30487554). Recruited to the early elongation complex of RNA polymerase II (RNAPII) via interaction with POLR2A and mediates formation of m6A(m) co-transcriptionally (By similarity).</text>
</comment>
<comment type="catalytic activity">
    <reaction evidence="2">
        <text>a 5'-end (N(7)-methyl 5'-triphosphoguanosine)-(2'-O-methyladenosine) in mRNA + S-adenosyl-L-methionine = a 5'-end (N(7)-methyl 5'-triphosphoguanosine)-(N(6),2'-O-dimethyladenosine) in mRNA + S-adenosyl-L-homocysteine + H(+)</text>
        <dbReference type="Rhea" id="RHEA:22744"/>
        <dbReference type="Rhea" id="RHEA-COMP:11518"/>
        <dbReference type="Rhea" id="RHEA-COMP:11519"/>
        <dbReference type="ChEBI" id="CHEBI:15378"/>
        <dbReference type="ChEBI" id="CHEBI:57856"/>
        <dbReference type="ChEBI" id="CHEBI:59789"/>
        <dbReference type="ChEBI" id="CHEBI:85958"/>
        <dbReference type="ChEBI" id="CHEBI:85959"/>
        <dbReference type="EC" id="2.1.1.62"/>
    </reaction>
</comment>
<comment type="activity regulation">
    <text evidence="2">Cap-specific adenosine methyltransferase activity is inhibited by zinc.</text>
</comment>
<comment type="subunit">
    <text evidence="2">Interacts with POLR2A; interacts with the phosphorylated C-terminal domain (CTD) of POLR2A.</text>
</comment>
<comment type="subcellular location">
    <subcellularLocation>
        <location evidence="2">Nucleus</location>
    </subcellularLocation>
</comment>
<comment type="domain">
    <text evidence="2">The WW domain is sufficient for direct and specific interaction with the phosphorylated CTD of RNAPII largest subunit.</text>
</comment>
<comment type="similarity">
    <text evidence="8">Belongs to the CAPAM family.</text>
</comment>
<feature type="chain" id="PRO_0000076088" description="mRNA (2'-O-methyladenosine-N(6)-)-methyltransferase">
    <location>
        <begin position="1"/>
        <end position="706"/>
    </location>
</feature>
<feature type="domain" description="WW" evidence="4">
    <location>
        <begin position="43"/>
        <end position="77"/>
    </location>
</feature>
<feature type="region of interest" description="Disordered" evidence="5">
    <location>
        <begin position="1"/>
        <end position="34"/>
    </location>
</feature>
<feature type="region of interest" description="Disordered" evidence="5">
    <location>
        <begin position="88"/>
        <end position="148"/>
    </location>
</feature>
<feature type="region of interest" description="Disordered" evidence="5">
    <location>
        <begin position="663"/>
        <end position="706"/>
    </location>
</feature>
<feature type="short sequence motif" description="Nuclear localization signal" evidence="3">
    <location>
        <begin position="109"/>
        <end position="113"/>
    </location>
</feature>
<feature type="short sequence motif" description="Nuclear localization signal" evidence="3">
    <location>
        <begin position="668"/>
        <end position="686"/>
    </location>
</feature>
<feature type="compositionally biased region" description="Polar residues" evidence="5">
    <location>
        <begin position="16"/>
        <end position="29"/>
    </location>
</feature>
<feature type="compositionally biased region" description="Low complexity" evidence="5">
    <location>
        <begin position="132"/>
        <end position="147"/>
    </location>
</feature>
<feature type="compositionally biased region" description="Low complexity" evidence="5">
    <location>
        <begin position="675"/>
        <end position="686"/>
    </location>
</feature>
<feature type="compositionally biased region" description="Basic and acidic residues" evidence="5">
    <location>
        <begin position="687"/>
        <end position="706"/>
    </location>
</feature>
<feature type="binding site" evidence="1">
    <location>
        <position position="234"/>
    </location>
    <ligand>
        <name>substrate</name>
    </ligand>
</feature>
<feature type="binding site" evidence="1">
    <location>
        <position position="264"/>
    </location>
    <ligand>
        <name>substrate</name>
    </ligand>
</feature>
<feature type="binding site" evidence="1 2">
    <location>
        <begin position="552"/>
        <end position="555"/>
    </location>
    <ligand>
        <name>S-adenosyl-L-methionine</name>
        <dbReference type="ChEBI" id="CHEBI:59789"/>
    </ligand>
</feature>
<feature type="binding site" evidence="1">
    <location>
        <position position="557"/>
    </location>
    <ligand>
        <name>substrate</name>
    </ligand>
</feature>
<feature type="binding site" evidence="1">
    <location>
        <begin position="587"/>
        <end position="591"/>
    </location>
    <ligand>
        <name>substrate</name>
    </ligand>
</feature>
<feature type="binding site" evidence="1 2">
    <location>
        <begin position="613"/>
        <end position="615"/>
    </location>
    <ligand>
        <name>S-adenosyl-L-methionine</name>
        <dbReference type="ChEBI" id="CHEBI:59789"/>
    </ligand>
</feature>
<feature type="modified residue" description="Phosphoserine" evidence="10 11">
    <location>
        <position position="30"/>
    </location>
</feature>
<feature type="modified residue" description="Phosphoserine" evidence="2">
    <location>
        <position position="116"/>
    </location>
</feature>
<feature type="modified residue" description="Phosphothreonine" evidence="2">
    <location>
        <position position="152"/>
    </location>
</feature>
<reference key="1">
    <citation type="journal article" date="2004" name="Genome Res.">
        <title>The status, quality, and expansion of the NIH full-length cDNA project: the Mammalian Gene Collection (MGC).</title>
        <authorList>
            <consortium name="The MGC Project Team"/>
        </authorList>
    </citation>
    <scope>NUCLEOTIDE SEQUENCE [LARGE SCALE MRNA]</scope>
    <source>
        <tissue>Kidney</tissue>
    </source>
</reference>
<reference key="2">
    <citation type="journal article" date="2007" name="Proc. Natl. Acad. Sci. U.S.A.">
        <title>Large-scale phosphorylation analysis of mouse liver.</title>
        <authorList>
            <person name="Villen J."/>
            <person name="Beausoleil S.A."/>
            <person name="Gerber S.A."/>
            <person name="Gygi S.P."/>
        </authorList>
    </citation>
    <scope>PHOSPHORYLATION [LARGE SCALE ANALYSIS] AT SER-30</scope>
    <scope>IDENTIFICATION BY MASS SPECTROMETRY [LARGE SCALE ANALYSIS]</scope>
    <source>
        <tissue>Liver</tissue>
    </source>
</reference>
<reference key="3">
    <citation type="journal article" date="2010" name="Cell">
        <title>A tissue-specific atlas of mouse protein phosphorylation and expression.</title>
        <authorList>
            <person name="Huttlin E.L."/>
            <person name="Jedrychowski M.P."/>
            <person name="Elias J.E."/>
            <person name="Goswami T."/>
            <person name="Rad R."/>
            <person name="Beausoleil S.A."/>
            <person name="Villen J."/>
            <person name="Haas W."/>
            <person name="Sowa M.E."/>
            <person name="Gygi S.P."/>
        </authorList>
    </citation>
    <scope>PHOSPHORYLATION [LARGE SCALE ANALYSIS] AT SER-30</scope>
    <scope>IDENTIFICATION BY MASS SPECTROMETRY [LARGE SCALE ANALYSIS]</scope>
    <source>
        <tissue>Brain</tissue>
        <tissue>Brown adipose tissue</tissue>
        <tissue>Lung</tissue>
        <tissue>Spleen</tissue>
        <tissue>Testis</tissue>
    </source>
</reference>
<reference key="4">
    <citation type="journal article" date="2019" name="Cell Res.">
        <title>Cap-specific, terminal N6-methylation by a mammalian m6Am methyltransferase.</title>
        <authorList>
            <person name="Sun H."/>
            <person name="Zhang M."/>
            <person name="Li K."/>
            <person name="Bai D."/>
            <person name="Yi C."/>
        </authorList>
    </citation>
    <scope>FUNCTION</scope>
</reference>
<proteinExistence type="evidence at protein level"/>
<dbReference type="EC" id="2.1.1.62" evidence="2"/>
<dbReference type="EMBL" id="BC031431">
    <property type="protein sequence ID" value="AAH31431.1"/>
    <property type="molecule type" value="mRNA"/>
</dbReference>
<dbReference type="CCDS" id="CCDS17064.1"/>
<dbReference type="RefSeq" id="NP_001361056.1">
    <property type="nucleotide sequence ID" value="NM_001374127.1"/>
</dbReference>
<dbReference type="RefSeq" id="NP_001361057.1">
    <property type="nucleotide sequence ID" value="NM_001374128.1"/>
</dbReference>
<dbReference type="RefSeq" id="NP_666241.1">
    <property type="nucleotide sequence ID" value="NM_146129.3"/>
</dbReference>
<dbReference type="RefSeq" id="XP_011237796.1">
    <property type="nucleotide sequence ID" value="XM_011239494.2"/>
</dbReference>
<dbReference type="RefSeq" id="XP_011237797.1">
    <property type="nucleotide sequence ID" value="XM_011239495.1"/>
</dbReference>
<dbReference type="SMR" id="P59114"/>
<dbReference type="BioGRID" id="230787">
    <property type="interactions" value="2"/>
</dbReference>
<dbReference type="FunCoup" id="P59114">
    <property type="interactions" value="3332"/>
</dbReference>
<dbReference type="STRING" id="10090.ENSMUSP00000039555"/>
<dbReference type="GlyGen" id="P59114">
    <property type="glycosylation" value="2 sites"/>
</dbReference>
<dbReference type="iPTMnet" id="P59114"/>
<dbReference type="PhosphoSitePlus" id="P59114"/>
<dbReference type="jPOST" id="P59114"/>
<dbReference type="PaxDb" id="10090-ENSMUSP00000039555"/>
<dbReference type="PeptideAtlas" id="P59114"/>
<dbReference type="ProteomicsDB" id="288072"/>
<dbReference type="Pumba" id="P59114"/>
<dbReference type="Antibodypedia" id="27891">
    <property type="antibodies" value="91 antibodies from 19 providers"/>
</dbReference>
<dbReference type="DNASU" id="228866"/>
<dbReference type="Ensembl" id="ENSMUST00000041643.5">
    <property type="protein sequence ID" value="ENSMUSP00000039555.4"/>
    <property type="gene ID" value="ENSMUSG00000039849.7"/>
</dbReference>
<dbReference type="GeneID" id="228866"/>
<dbReference type="KEGG" id="mmu:228866"/>
<dbReference type="UCSC" id="uc008nwp.1">
    <property type="organism name" value="mouse"/>
</dbReference>
<dbReference type="AGR" id="MGI:2443858"/>
<dbReference type="CTD" id="63935"/>
<dbReference type="MGI" id="MGI:2443858">
    <property type="gene designation" value="Pcif1"/>
</dbReference>
<dbReference type="VEuPathDB" id="HostDB:ENSMUSG00000039849"/>
<dbReference type="eggNOG" id="ENOG502QVT7">
    <property type="taxonomic scope" value="Eukaryota"/>
</dbReference>
<dbReference type="GeneTree" id="ENSGT00390000016206"/>
<dbReference type="HOGENOM" id="CLU_014369_0_0_1"/>
<dbReference type="InParanoid" id="P59114"/>
<dbReference type="OMA" id="ANENHRS"/>
<dbReference type="OrthoDB" id="193787at2759"/>
<dbReference type="PhylomeDB" id="P59114"/>
<dbReference type="TreeFam" id="TF350163"/>
<dbReference type="BioGRID-ORCS" id="228866">
    <property type="hits" value="7 hits in 80 CRISPR screens"/>
</dbReference>
<dbReference type="ChiTaRS" id="Pcif1">
    <property type="organism name" value="mouse"/>
</dbReference>
<dbReference type="PRO" id="PR:P59114"/>
<dbReference type="Proteomes" id="UP000000589">
    <property type="component" value="Chromosome 2"/>
</dbReference>
<dbReference type="RNAct" id="P59114">
    <property type="molecule type" value="protein"/>
</dbReference>
<dbReference type="Bgee" id="ENSMUSG00000039849">
    <property type="expression patterns" value="Expressed in embryonic brain and 209 other cell types or tissues"/>
</dbReference>
<dbReference type="ExpressionAtlas" id="P59114">
    <property type="expression patterns" value="baseline and differential"/>
</dbReference>
<dbReference type="GO" id="GO:0045171">
    <property type="term" value="C:intercellular bridge"/>
    <property type="evidence" value="ECO:0007669"/>
    <property type="project" value="Ensembl"/>
</dbReference>
<dbReference type="GO" id="GO:0015630">
    <property type="term" value="C:microtubule cytoskeleton"/>
    <property type="evidence" value="ECO:0007669"/>
    <property type="project" value="Ensembl"/>
</dbReference>
<dbReference type="GO" id="GO:0005654">
    <property type="term" value="C:nucleoplasm"/>
    <property type="evidence" value="ECO:0007669"/>
    <property type="project" value="Ensembl"/>
</dbReference>
<dbReference type="GO" id="GO:0005634">
    <property type="term" value="C:nucleus"/>
    <property type="evidence" value="ECO:0000250"/>
    <property type="project" value="UniProtKB"/>
</dbReference>
<dbReference type="GO" id="GO:0016422">
    <property type="term" value="F:mRNA (2'-O-methyladenosine-N6-)-methyltransferase activity"/>
    <property type="evidence" value="ECO:0000315"/>
    <property type="project" value="UniProtKB"/>
</dbReference>
<dbReference type="GO" id="GO:0099122">
    <property type="term" value="F:RNA polymerase II C-terminal domain binding"/>
    <property type="evidence" value="ECO:0000250"/>
    <property type="project" value="UniProtKB"/>
</dbReference>
<dbReference type="GO" id="GO:1990269">
    <property type="term" value="F:RNA polymerase II C-terminal domain phosphoserine binding"/>
    <property type="evidence" value="ECO:0007669"/>
    <property type="project" value="Ensembl"/>
</dbReference>
<dbReference type="GO" id="GO:1904047">
    <property type="term" value="F:S-adenosyl-L-methionine binding"/>
    <property type="evidence" value="ECO:0000250"/>
    <property type="project" value="UniProtKB"/>
</dbReference>
<dbReference type="GO" id="GO:0032259">
    <property type="term" value="P:methylation"/>
    <property type="evidence" value="ECO:0007669"/>
    <property type="project" value="UniProtKB-KW"/>
</dbReference>
<dbReference type="GO" id="GO:0006397">
    <property type="term" value="P:mRNA processing"/>
    <property type="evidence" value="ECO:0007669"/>
    <property type="project" value="Ensembl"/>
</dbReference>
<dbReference type="GO" id="GO:0017148">
    <property type="term" value="P:negative regulation of translation"/>
    <property type="evidence" value="ECO:0007669"/>
    <property type="project" value="Ensembl"/>
</dbReference>
<dbReference type="GO" id="GO:0045727">
    <property type="term" value="P:positive regulation of translation"/>
    <property type="evidence" value="ECO:0000250"/>
    <property type="project" value="UniProtKB"/>
</dbReference>
<dbReference type="CDD" id="cd00201">
    <property type="entry name" value="WW"/>
    <property type="match status" value="1"/>
</dbReference>
<dbReference type="FunFam" id="1.20.1270.10:FF:000020">
    <property type="entry name" value="Phosphorylated CTD-interacting factor 1"/>
    <property type="match status" value="1"/>
</dbReference>
<dbReference type="FunFam" id="2.20.70.10:FF:000036">
    <property type="entry name" value="Phosphorylated CTD-interacting factor 1"/>
    <property type="match status" value="1"/>
</dbReference>
<dbReference type="Gene3D" id="1.20.1270.10">
    <property type="match status" value="1"/>
</dbReference>
<dbReference type="Gene3D" id="2.20.70.10">
    <property type="match status" value="1"/>
</dbReference>
<dbReference type="InterPro" id="IPR029048">
    <property type="entry name" value="HSP70_C_sf"/>
</dbReference>
<dbReference type="InterPro" id="IPR039881">
    <property type="entry name" value="PCIF1-like"/>
</dbReference>
<dbReference type="InterPro" id="IPR022035">
    <property type="entry name" value="PCIF1_WW"/>
</dbReference>
<dbReference type="InterPro" id="IPR001202">
    <property type="entry name" value="WW_dom"/>
</dbReference>
<dbReference type="InterPro" id="IPR036020">
    <property type="entry name" value="WW_dom_sf"/>
</dbReference>
<dbReference type="PANTHER" id="PTHR21727:SF0">
    <property type="entry name" value="MRNA (2'-O-METHYLADENOSINE-N(6)-)-METHYLTRANSFERASE"/>
    <property type="match status" value="1"/>
</dbReference>
<dbReference type="PANTHER" id="PTHR21727">
    <property type="entry name" value="PHOSPHORYLATED CTD INTERACTING FACTOR 1"/>
    <property type="match status" value="1"/>
</dbReference>
<dbReference type="Pfam" id="PF12237">
    <property type="entry name" value="PCIF1_WW"/>
    <property type="match status" value="1"/>
</dbReference>
<dbReference type="Pfam" id="PF00397">
    <property type="entry name" value="WW"/>
    <property type="match status" value="1"/>
</dbReference>
<dbReference type="SMART" id="SM00456">
    <property type="entry name" value="WW"/>
    <property type="match status" value="1"/>
</dbReference>
<dbReference type="SUPFAM" id="SSF51045">
    <property type="entry name" value="WW domain"/>
    <property type="match status" value="1"/>
</dbReference>
<dbReference type="PROSITE" id="PS50020">
    <property type="entry name" value="WW_DOMAIN_2"/>
    <property type="match status" value="1"/>
</dbReference>
<gene>
    <name evidence="7 9" type="primary">Pcif1</name>
</gene>